<keyword id="KW-1185">Reference proteome</keyword>
<keyword id="KW-0677">Repeat</keyword>
<keyword id="KW-0964">Secreted</keyword>
<keyword id="KW-0732">Signal</keyword>
<protein>
    <recommendedName>
        <fullName>Acidic proline-rich protein HP43A</fullName>
    </recommendedName>
</protein>
<dbReference type="EMBL" id="J02686">
    <property type="status" value="NOT_ANNOTATED_CDS"/>
    <property type="molecule type" value="Genomic_DNA"/>
</dbReference>
<dbReference type="PIR" id="A26548">
    <property type="entry name" value="A26548"/>
</dbReference>
<dbReference type="SMR" id="P06680"/>
<dbReference type="Proteomes" id="UP000189706">
    <property type="component" value="Unplaced"/>
</dbReference>
<dbReference type="GO" id="GO:0005615">
    <property type="term" value="C:extracellular space"/>
    <property type="evidence" value="ECO:0007669"/>
    <property type="project" value="TreeGrafter"/>
</dbReference>
<dbReference type="InterPro" id="IPR026086">
    <property type="entry name" value="Pro-rich"/>
</dbReference>
<dbReference type="PANTHER" id="PTHR23203:SF20">
    <property type="entry name" value="BASIC SALIVARY PROLINE-RICH PROTEIN 1-RELATED"/>
    <property type="match status" value="1"/>
</dbReference>
<dbReference type="PANTHER" id="PTHR23203">
    <property type="entry name" value="PROLINE-RICH PROTEIN"/>
    <property type="match status" value="1"/>
</dbReference>
<dbReference type="Pfam" id="PF15240">
    <property type="entry name" value="Pro-rich"/>
    <property type="match status" value="2"/>
</dbReference>
<dbReference type="SMART" id="SM01412">
    <property type="entry name" value="Pro-rich"/>
    <property type="match status" value="1"/>
</dbReference>
<proteinExistence type="inferred from homology"/>
<organism>
    <name type="scientific">Mesocricetus auratus</name>
    <name type="common">Golden hamster</name>
    <dbReference type="NCBI Taxonomy" id="10036"/>
    <lineage>
        <taxon>Eukaryota</taxon>
        <taxon>Metazoa</taxon>
        <taxon>Chordata</taxon>
        <taxon>Craniata</taxon>
        <taxon>Vertebrata</taxon>
        <taxon>Euteleostomi</taxon>
        <taxon>Mammalia</taxon>
        <taxon>Eutheria</taxon>
        <taxon>Euarchontoglires</taxon>
        <taxon>Glires</taxon>
        <taxon>Rodentia</taxon>
        <taxon>Myomorpha</taxon>
        <taxon>Muroidea</taxon>
        <taxon>Cricetidae</taxon>
        <taxon>Cricetinae</taxon>
        <taxon>Mesocricetus</taxon>
    </lineage>
</organism>
<accession>P06680</accession>
<reference key="1">
    <citation type="journal article" date="1987" name="J. Biol. Chem.">
        <title>Structure, organization, and regulation of a hamster proline-rich protein gene. A multigene family.</title>
        <authorList>
            <person name="Ann D.K."/>
            <person name="Gadbois D."/>
            <person name="Carlson D.M."/>
        </authorList>
    </citation>
    <scope>NUCLEOTIDE SEQUENCE [GENOMIC DNA]</scope>
</reference>
<comment type="subcellular location">
    <subcellularLocation>
        <location evidence="1">Secreted</location>
    </subcellularLocation>
</comment>
<gene>
    <name type="primary">H29</name>
</gene>
<evidence type="ECO:0000250" key="1"/>
<evidence type="ECO:0000256" key="2">
    <source>
        <dbReference type="SAM" id="MobiDB-lite"/>
    </source>
</evidence>
<sequence>MLVVLLTAALLAEHATIYEDSISQLSEEEQQGQDPGQLHQRPGQFPPQPSASDEEGDDDGEEDGNAPEGPPQQGGDHQKPRPPKPGNQQGPPQQEGQQQNRPPKPGNQEGPPQQEGQQQNRPPKPGNQEGPPQQEGQQQNRPPKPGNQEGPPQQEGQQQNRPPKPGNQEGPPQQGSEEQSTSL</sequence>
<name>PRPH_MESAU</name>
<feature type="signal peptide">
    <location>
        <begin position="1"/>
        <end position="14"/>
    </location>
</feature>
<feature type="chain" id="PRO_0000022140" description="Acidic proline-rich protein HP43A">
    <location>
        <begin position="15"/>
        <end position="183"/>
    </location>
</feature>
<feature type="repeat" description="1">
    <location>
        <begin position="81"/>
        <end position="100"/>
    </location>
</feature>
<feature type="repeat" description="2">
    <location>
        <begin position="101"/>
        <end position="120"/>
    </location>
</feature>
<feature type="repeat" description="3">
    <location>
        <begin position="121"/>
        <end position="140"/>
    </location>
</feature>
<feature type="repeat" description="4">
    <location>
        <begin position="141"/>
        <end position="160"/>
    </location>
</feature>
<feature type="repeat" description="5">
    <location>
        <begin position="161"/>
        <end position="180"/>
    </location>
</feature>
<feature type="region of interest" description="Disordered" evidence="2">
    <location>
        <begin position="22"/>
        <end position="183"/>
    </location>
</feature>
<feature type="compositionally biased region" description="Acidic residues" evidence="2">
    <location>
        <begin position="52"/>
        <end position="65"/>
    </location>
</feature>
<feature type="compositionally biased region" description="Low complexity" evidence="2">
    <location>
        <begin position="86"/>
        <end position="183"/>
    </location>
</feature>